<proteinExistence type="inferred from homology"/>
<organism>
    <name type="scientific">Agathobacter rectalis (strain ATCC 33656 / DSM 3377 / JCM 17463 / KCTC 5835 / VPI 0990)</name>
    <name type="common">Eubacterium rectale</name>
    <dbReference type="NCBI Taxonomy" id="515619"/>
    <lineage>
        <taxon>Bacteria</taxon>
        <taxon>Bacillati</taxon>
        <taxon>Bacillota</taxon>
        <taxon>Clostridia</taxon>
        <taxon>Lachnospirales</taxon>
        <taxon>Lachnospiraceae</taxon>
        <taxon>Agathobacter</taxon>
    </lineage>
</organism>
<sequence length="524" mass="58462">MDQEKVIVIDFGGQYNQLVARRVRECNVYCEIYSYKIDIEKIKEMNPKGIILTGGPNSCYEENSPSYRKELFELGIPVLGICYGAQLMMHKLGGKVITPEVGEYGKTEITYSANGVMFKDLPSESVCWMSHFDRIAEAAPGFEVVAHTADCPIAATQNVEKKLYAVQFHPEVLHTKNGTQMIYNFVRGVCGCAGTWKMDSFVKNTIDEIREQVGDGKVLLALSGGVDSSVLAALLAKAIGKQLTCVFVDHGLLRKNEGDEVEGVFGKDGSFDINFVRVNAQERYYSKLAGVTEPERKRKIIGEEFIRVFEEEAKKIGKVDFLAQGTIYPDVVESGLGGESAVIKSHHNVGGLPEHVDFKDIVEPLRNLFKDEVRKVGLELGLPDYLVFRQPFPGPGLGIRIIGEVTAEKVRIVQDADWIYRSEVEKAAKEYKEAHGEEPSWMPNQYFAALTNMRSVGVMGDERTYDYAVAVRAVRTVDFMTAEAAEIPFEVLQTVMSRIINEVKGVNRVFYDLTSKPPGTIEFE</sequence>
<accession>C4ZCQ4</accession>
<comment type="function">
    <text evidence="1">Catalyzes the synthesis of GMP from XMP.</text>
</comment>
<comment type="catalytic activity">
    <reaction evidence="1">
        <text>XMP + L-glutamine + ATP + H2O = GMP + L-glutamate + AMP + diphosphate + 2 H(+)</text>
        <dbReference type="Rhea" id="RHEA:11680"/>
        <dbReference type="ChEBI" id="CHEBI:15377"/>
        <dbReference type="ChEBI" id="CHEBI:15378"/>
        <dbReference type="ChEBI" id="CHEBI:29985"/>
        <dbReference type="ChEBI" id="CHEBI:30616"/>
        <dbReference type="ChEBI" id="CHEBI:33019"/>
        <dbReference type="ChEBI" id="CHEBI:57464"/>
        <dbReference type="ChEBI" id="CHEBI:58115"/>
        <dbReference type="ChEBI" id="CHEBI:58359"/>
        <dbReference type="ChEBI" id="CHEBI:456215"/>
        <dbReference type="EC" id="6.3.5.2"/>
    </reaction>
</comment>
<comment type="pathway">
    <text evidence="1">Purine metabolism; GMP biosynthesis; GMP from XMP (L-Gln route): step 1/1.</text>
</comment>
<comment type="subunit">
    <text evidence="1">Homodimer.</text>
</comment>
<keyword id="KW-0067">ATP-binding</keyword>
<keyword id="KW-0315">Glutamine amidotransferase</keyword>
<keyword id="KW-0332">GMP biosynthesis</keyword>
<keyword id="KW-0436">Ligase</keyword>
<keyword id="KW-0547">Nucleotide-binding</keyword>
<keyword id="KW-0658">Purine biosynthesis</keyword>
<gene>
    <name evidence="1" type="primary">guaA</name>
    <name type="ordered locus">EUBREC_0620</name>
</gene>
<name>GUAA_AGARV</name>
<evidence type="ECO:0000255" key="1">
    <source>
        <dbReference type="HAMAP-Rule" id="MF_00344"/>
    </source>
</evidence>
<feature type="chain" id="PRO_1000205303" description="GMP synthase [glutamine-hydrolyzing]">
    <location>
        <begin position="1"/>
        <end position="524"/>
    </location>
</feature>
<feature type="domain" description="Glutamine amidotransferase type-1" evidence="1">
    <location>
        <begin position="5"/>
        <end position="195"/>
    </location>
</feature>
<feature type="domain" description="GMPS ATP-PPase" evidence="1">
    <location>
        <begin position="196"/>
        <end position="389"/>
    </location>
</feature>
<feature type="active site" description="Nucleophile" evidence="1">
    <location>
        <position position="82"/>
    </location>
</feature>
<feature type="active site" evidence="1">
    <location>
        <position position="169"/>
    </location>
</feature>
<feature type="active site" evidence="1">
    <location>
        <position position="171"/>
    </location>
</feature>
<feature type="binding site" evidence="1">
    <location>
        <begin position="223"/>
        <end position="229"/>
    </location>
    <ligand>
        <name>ATP</name>
        <dbReference type="ChEBI" id="CHEBI:30616"/>
    </ligand>
</feature>
<protein>
    <recommendedName>
        <fullName evidence="1">GMP synthase [glutamine-hydrolyzing]</fullName>
        <ecNumber evidence="1">6.3.5.2</ecNumber>
    </recommendedName>
    <alternativeName>
        <fullName evidence="1">GMP synthetase</fullName>
    </alternativeName>
    <alternativeName>
        <fullName evidence="1">Glutamine amidotransferase</fullName>
    </alternativeName>
</protein>
<dbReference type="EC" id="6.3.5.2" evidence="1"/>
<dbReference type="EMBL" id="CP001107">
    <property type="protein sequence ID" value="ACR74409.1"/>
    <property type="molecule type" value="Genomic_DNA"/>
</dbReference>
<dbReference type="RefSeq" id="WP_012741526.1">
    <property type="nucleotide sequence ID" value="NC_012781.1"/>
</dbReference>
<dbReference type="SMR" id="C4ZCQ4"/>
<dbReference type="STRING" id="515619.EUBREC_0620"/>
<dbReference type="MEROPS" id="C26.A24"/>
<dbReference type="PaxDb" id="515619-EUBREC_0620"/>
<dbReference type="GeneID" id="86987505"/>
<dbReference type="KEGG" id="ere:EUBREC_0620"/>
<dbReference type="HOGENOM" id="CLU_014340_0_5_9"/>
<dbReference type="UniPathway" id="UPA00189">
    <property type="reaction ID" value="UER00296"/>
</dbReference>
<dbReference type="Proteomes" id="UP000001477">
    <property type="component" value="Chromosome"/>
</dbReference>
<dbReference type="GO" id="GO:0005829">
    <property type="term" value="C:cytosol"/>
    <property type="evidence" value="ECO:0007669"/>
    <property type="project" value="TreeGrafter"/>
</dbReference>
<dbReference type="GO" id="GO:0005524">
    <property type="term" value="F:ATP binding"/>
    <property type="evidence" value="ECO:0007669"/>
    <property type="project" value="UniProtKB-UniRule"/>
</dbReference>
<dbReference type="GO" id="GO:0003921">
    <property type="term" value="F:GMP synthase activity"/>
    <property type="evidence" value="ECO:0007669"/>
    <property type="project" value="InterPro"/>
</dbReference>
<dbReference type="CDD" id="cd01742">
    <property type="entry name" value="GATase1_GMP_Synthase"/>
    <property type="match status" value="1"/>
</dbReference>
<dbReference type="CDD" id="cd01997">
    <property type="entry name" value="GMP_synthase_C"/>
    <property type="match status" value="1"/>
</dbReference>
<dbReference type="FunFam" id="3.30.300.10:FF:000002">
    <property type="entry name" value="GMP synthase [glutamine-hydrolyzing]"/>
    <property type="match status" value="1"/>
</dbReference>
<dbReference type="FunFam" id="3.40.50.620:FF:000001">
    <property type="entry name" value="GMP synthase [glutamine-hydrolyzing]"/>
    <property type="match status" value="1"/>
</dbReference>
<dbReference type="FunFam" id="3.40.50.880:FF:000001">
    <property type="entry name" value="GMP synthase [glutamine-hydrolyzing]"/>
    <property type="match status" value="1"/>
</dbReference>
<dbReference type="Gene3D" id="3.30.300.10">
    <property type="match status" value="1"/>
</dbReference>
<dbReference type="Gene3D" id="3.40.50.880">
    <property type="match status" value="1"/>
</dbReference>
<dbReference type="Gene3D" id="3.40.50.620">
    <property type="entry name" value="HUPs"/>
    <property type="match status" value="1"/>
</dbReference>
<dbReference type="HAMAP" id="MF_00344">
    <property type="entry name" value="GMP_synthase"/>
    <property type="match status" value="1"/>
</dbReference>
<dbReference type="InterPro" id="IPR029062">
    <property type="entry name" value="Class_I_gatase-like"/>
</dbReference>
<dbReference type="InterPro" id="IPR017926">
    <property type="entry name" value="GATASE"/>
</dbReference>
<dbReference type="InterPro" id="IPR001674">
    <property type="entry name" value="GMP_synth_C"/>
</dbReference>
<dbReference type="InterPro" id="IPR004739">
    <property type="entry name" value="GMP_synth_GATase"/>
</dbReference>
<dbReference type="InterPro" id="IPR022955">
    <property type="entry name" value="GMP_synthase"/>
</dbReference>
<dbReference type="InterPro" id="IPR025777">
    <property type="entry name" value="GMPS_ATP_PPase_dom"/>
</dbReference>
<dbReference type="InterPro" id="IPR022310">
    <property type="entry name" value="NAD/GMP_synthase"/>
</dbReference>
<dbReference type="InterPro" id="IPR014729">
    <property type="entry name" value="Rossmann-like_a/b/a_fold"/>
</dbReference>
<dbReference type="NCBIfam" id="TIGR00884">
    <property type="entry name" value="guaA_Cterm"/>
    <property type="match status" value="1"/>
</dbReference>
<dbReference type="NCBIfam" id="TIGR00888">
    <property type="entry name" value="guaA_Nterm"/>
    <property type="match status" value="1"/>
</dbReference>
<dbReference type="NCBIfam" id="NF000848">
    <property type="entry name" value="PRK00074.1"/>
    <property type="match status" value="1"/>
</dbReference>
<dbReference type="PANTHER" id="PTHR11922:SF2">
    <property type="entry name" value="GMP SYNTHASE [GLUTAMINE-HYDROLYZING]"/>
    <property type="match status" value="1"/>
</dbReference>
<dbReference type="PANTHER" id="PTHR11922">
    <property type="entry name" value="GMP SYNTHASE-RELATED"/>
    <property type="match status" value="1"/>
</dbReference>
<dbReference type="Pfam" id="PF00117">
    <property type="entry name" value="GATase"/>
    <property type="match status" value="1"/>
</dbReference>
<dbReference type="Pfam" id="PF00958">
    <property type="entry name" value="GMP_synt_C"/>
    <property type="match status" value="1"/>
</dbReference>
<dbReference type="Pfam" id="PF02540">
    <property type="entry name" value="NAD_synthase"/>
    <property type="match status" value="1"/>
</dbReference>
<dbReference type="PRINTS" id="PR00097">
    <property type="entry name" value="ANTSNTHASEII"/>
</dbReference>
<dbReference type="PRINTS" id="PR00099">
    <property type="entry name" value="CPSGATASE"/>
</dbReference>
<dbReference type="PRINTS" id="PR00096">
    <property type="entry name" value="GATASE"/>
</dbReference>
<dbReference type="SUPFAM" id="SSF52402">
    <property type="entry name" value="Adenine nucleotide alpha hydrolases-like"/>
    <property type="match status" value="1"/>
</dbReference>
<dbReference type="SUPFAM" id="SSF52317">
    <property type="entry name" value="Class I glutamine amidotransferase-like"/>
    <property type="match status" value="1"/>
</dbReference>
<dbReference type="SUPFAM" id="SSF54810">
    <property type="entry name" value="GMP synthetase C-terminal dimerisation domain"/>
    <property type="match status" value="1"/>
</dbReference>
<dbReference type="PROSITE" id="PS51273">
    <property type="entry name" value="GATASE_TYPE_1"/>
    <property type="match status" value="1"/>
</dbReference>
<dbReference type="PROSITE" id="PS51553">
    <property type="entry name" value="GMPS_ATP_PPASE"/>
    <property type="match status" value="1"/>
</dbReference>
<reference key="1">
    <citation type="journal article" date="2009" name="Proc. Natl. Acad. Sci. U.S.A.">
        <title>Characterizing a model human gut microbiota composed of members of its two dominant bacterial phyla.</title>
        <authorList>
            <person name="Mahowald M.A."/>
            <person name="Rey F.E."/>
            <person name="Seedorf H."/>
            <person name="Turnbaugh P.J."/>
            <person name="Fulton R.S."/>
            <person name="Wollam A."/>
            <person name="Shah N."/>
            <person name="Wang C."/>
            <person name="Magrini V."/>
            <person name="Wilson R.K."/>
            <person name="Cantarel B.L."/>
            <person name="Coutinho P.M."/>
            <person name="Henrissat B."/>
            <person name="Crock L.W."/>
            <person name="Russell A."/>
            <person name="Verberkmoes N.C."/>
            <person name="Hettich R.L."/>
            <person name="Gordon J.I."/>
        </authorList>
    </citation>
    <scope>NUCLEOTIDE SEQUENCE [LARGE SCALE GENOMIC DNA]</scope>
    <source>
        <strain>ATCC 33656 / DSM 3377 / JCM 17463 / KCTC 5835 / LMG 30912 / VPI 0990</strain>
    </source>
</reference>